<sequence length="268" mass="30353">MAVGKNKGLSKGGKKGGKKKVIDPFSRKDWYDVKAPNMFQTRQIGKTLVNRTQGQRIASDYLKGRVFEVSLADLQKDIDPERSFRKFRLIAEDVQDRNVLCNFHGMDLTTDKYRSMVKKWQTLIEAIVEAKTVDGYLLRVFCIGFTAKDQQSQRKTCYAQQSQVRKIRARMTDIINNEVSGADLKQLVNKLALDSIAKDIEKSCQRIYPLHDVYIRKVKVLKKPRFDISKLLELHGDGGGKTSEAVVSAEGAVVDRPEGYEPPVQEAV</sequence>
<organism>
    <name type="scientific">Drosophila willistoni</name>
    <name type="common">Fruit fly</name>
    <dbReference type="NCBI Taxonomy" id="7260"/>
    <lineage>
        <taxon>Eukaryota</taxon>
        <taxon>Metazoa</taxon>
        <taxon>Ecdysozoa</taxon>
        <taxon>Arthropoda</taxon>
        <taxon>Hexapoda</taxon>
        <taxon>Insecta</taxon>
        <taxon>Pterygota</taxon>
        <taxon>Neoptera</taxon>
        <taxon>Endopterygota</taxon>
        <taxon>Diptera</taxon>
        <taxon>Brachycera</taxon>
        <taxon>Muscomorpha</taxon>
        <taxon>Ephydroidea</taxon>
        <taxon>Drosophilidae</taxon>
        <taxon>Drosophila</taxon>
        <taxon>Sophophora</taxon>
    </lineage>
</organism>
<keyword id="KW-0963">Cytoplasm</keyword>
<keyword id="KW-0217">Developmental protein</keyword>
<keyword id="KW-0221">Differentiation</keyword>
<keyword id="KW-0896">Oogenesis</keyword>
<keyword id="KW-1185">Reference proteome</keyword>
<keyword id="KW-0687">Ribonucleoprotein</keyword>
<keyword id="KW-0689">Ribosomal protein</keyword>
<comment type="function">
    <text evidence="1">Essential for oogenesis; required for late follicle cell development.</text>
</comment>
<comment type="subunit">
    <text evidence="1">Component of the small ribosomal subunit. Mature ribosomes consist of a small (40S) and a large (60S) subunit. The 40S subunit contains about 33 different proteins and 1 molecule of RNA (18S). The 60S subunit contains about 49 different proteins and 3 molecules of RNA (28S, 5.8S and 5S).</text>
</comment>
<comment type="subcellular location">
    <subcellularLocation>
        <location evidence="1">Cytoplasm</location>
    </subcellularLocation>
</comment>
<comment type="similarity">
    <text evidence="1">Belongs to the eukaryotic ribosomal protein eS1 family.</text>
</comment>
<name>RS3A_DROWI</name>
<reference key="1">
    <citation type="journal article" date="2007" name="Nature">
        <title>Evolution of genes and genomes on the Drosophila phylogeny.</title>
        <authorList>
            <consortium name="Drosophila 12 genomes consortium"/>
        </authorList>
    </citation>
    <scope>NUCLEOTIDE SEQUENCE [LARGE SCALE GENOMIC DNA]</scope>
    <source>
        <strain>Tucson 14030-0811.24</strain>
    </source>
</reference>
<gene>
    <name evidence="1" type="primary">RpS3A</name>
    <name type="ORF">GK13664</name>
</gene>
<feature type="initiator methionine" description="Removed" evidence="1">
    <location>
        <position position="1"/>
    </location>
</feature>
<feature type="chain" id="PRO_0000389314" description="Small ribosomal subunit protein eS1">
    <location>
        <begin position="2"/>
        <end position="268"/>
    </location>
</feature>
<feature type="region of interest" description="Disordered" evidence="2">
    <location>
        <begin position="1"/>
        <end position="21"/>
    </location>
</feature>
<protein>
    <recommendedName>
        <fullName evidence="1">Small ribosomal subunit protein eS1</fullName>
    </recommendedName>
    <alternativeName>
        <fullName evidence="3">40S ribosomal protein S3a</fullName>
    </alternativeName>
</protein>
<dbReference type="EMBL" id="CH964272">
    <property type="protein sequence ID" value="EDW83553.1"/>
    <property type="molecule type" value="Genomic_DNA"/>
</dbReference>
<dbReference type="SMR" id="B4NHI4"/>
<dbReference type="STRING" id="7260.B4NHI4"/>
<dbReference type="EnsemblMetazoa" id="FBtr0244315">
    <property type="protein sequence ID" value="FBpp0242807"/>
    <property type="gene ID" value="FBgn0215672"/>
</dbReference>
<dbReference type="EnsemblMetazoa" id="XM_002072531.4">
    <property type="protein sequence ID" value="XP_002072567.1"/>
    <property type="gene ID" value="LOC6650062"/>
</dbReference>
<dbReference type="GeneID" id="6650062"/>
<dbReference type="KEGG" id="dwi:6650062"/>
<dbReference type="CTD" id="6189"/>
<dbReference type="eggNOG" id="KOG1628">
    <property type="taxonomic scope" value="Eukaryota"/>
</dbReference>
<dbReference type="HOGENOM" id="CLU_062507_0_1_1"/>
<dbReference type="OMA" id="MCEIITR"/>
<dbReference type="OrthoDB" id="9834376at2759"/>
<dbReference type="PhylomeDB" id="B4NHI4"/>
<dbReference type="ChiTaRS" id="RpS3A">
    <property type="organism name" value="fly"/>
</dbReference>
<dbReference type="Proteomes" id="UP000007798">
    <property type="component" value="Unassembled WGS sequence"/>
</dbReference>
<dbReference type="GO" id="GO:0022627">
    <property type="term" value="C:cytosolic small ribosomal subunit"/>
    <property type="evidence" value="ECO:0007669"/>
    <property type="project" value="UniProtKB-UniRule"/>
</dbReference>
<dbReference type="GO" id="GO:0003735">
    <property type="term" value="F:structural constituent of ribosome"/>
    <property type="evidence" value="ECO:0007669"/>
    <property type="project" value="UniProtKB-UniRule"/>
</dbReference>
<dbReference type="GO" id="GO:0048477">
    <property type="term" value="P:oogenesis"/>
    <property type="evidence" value="ECO:0007669"/>
    <property type="project" value="UniProtKB-KW"/>
</dbReference>
<dbReference type="GO" id="GO:0006412">
    <property type="term" value="P:translation"/>
    <property type="evidence" value="ECO:0007669"/>
    <property type="project" value="UniProtKB-UniRule"/>
</dbReference>
<dbReference type="HAMAP" id="MF_03122">
    <property type="entry name" value="Ribosomal_eS1_euk"/>
    <property type="match status" value="1"/>
</dbReference>
<dbReference type="InterPro" id="IPR001593">
    <property type="entry name" value="Ribosomal_eS1"/>
</dbReference>
<dbReference type="InterPro" id="IPR018281">
    <property type="entry name" value="Ribosomal_eS1_CS"/>
</dbReference>
<dbReference type="InterPro" id="IPR027500">
    <property type="entry name" value="Ribosomal_eS1_euk"/>
</dbReference>
<dbReference type="PANTHER" id="PTHR11830">
    <property type="entry name" value="40S RIBOSOMAL PROTEIN S3A"/>
    <property type="match status" value="1"/>
</dbReference>
<dbReference type="Pfam" id="PF01015">
    <property type="entry name" value="Ribosomal_S3Ae"/>
    <property type="match status" value="1"/>
</dbReference>
<dbReference type="SMART" id="SM01397">
    <property type="entry name" value="Ribosomal_S3Ae"/>
    <property type="match status" value="1"/>
</dbReference>
<dbReference type="PROSITE" id="PS01191">
    <property type="entry name" value="RIBOSOMAL_S3AE"/>
    <property type="match status" value="1"/>
</dbReference>
<evidence type="ECO:0000255" key="1">
    <source>
        <dbReference type="HAMAP-Rule" id="MF_03122"/>
    </source>
</evidence>
<evidence type="ECO:0000256" key="2">
    <source>
        <dbReference type="SAM" id="MobiDB-lite"/>
    </source>
</evidence>
<evidence type="ECO:0000305" key="3"/>
<accession>B4NHI4</accession>
<proteinExistence type="inferred from homology"/>